<sequence>MFDIGWSELLVIGVVALIAIGPKELPGVLRMVGQWMGKARRMASEFQGQFQEAMREAEMADLKKSFDEVKEAASGFSPSGMMSSLQRDVDKALDIEGVDKPVESQPAASAAPETSATVEAPATPTTPEPPRVETFVEADAHQAVGEPLAIVREIKPEPQPQSLDGAAPAEAERLKDAKAS</sequence>
<reference key="1">
    <citation type="journal article" date="2007" name="Science">
        <title>Legumes symbioses: absence of nod genes in photosynthetic bradyrhizobia.</title>
        <authorList>
            <person name="Giraud E."/>
            <person name="Moulin L."/>
            <person name="Vallenet D."/>
            <person name="Barbe V."/>
            <person name="Cytryn E."/>
            <person name="Avarre J.-C."/>
            <person name="Jaubert M."/>
            <person name="Simon D."/>
            <person name="Cartieaux F."/>
            <person name="Prin Y."/>
            <person name="Bena G."/>
            <person name="Hannibal L."/>
            <person name="Fardoux J."/>
            <person name="Kojadinovic M."/>
            <person name="Vuillet L."/>
            <person name="Lajus A."/>
            <person name="Cruveiller S."/>
            <person name="Rouy Z."/>
            <person name="Mangenot S."/>
            <person name="Segurens B."/>
            <person name="Dossat C."/>
            <person name="Franck W.L."/>
            <person name="Chang W.-S."/>
            <person name="Saunders E."/>
            <person name="Bruce D."/>
            <person name="Richardson P."/>
            <person name="Normand P."/>
            <person name="Dreyfus B."/>
            <person name="Pignol D."/>
            <person name="Stacey G."/>
            <person name="Emerich D."/>
            <person name="Vermeglio A."/>
            <person name="Medigue C."/>
            <person name="Sadowsky M."/>
        </authorList>
    </citation>
    <scope>NUCLEOTIDE SEQUENCE [LARGE SCALE GENOMIC DNA]</scope>
    <source>
        <strain>BTAi1 / ATCC BAA-1182</strain>
    </source>
</reference>
<gene>
    <name evidence="1" type="primary">tatB</name>
    <name type="ordered locus">BBta_4416</name>
</gene>
<dbReference type="EMBL" id="CP000494">
    <property type="protein sequence ID" value="ABQ36455.1"/>
    <property type="molecule type" value="Genomic_DNA"/>
</dbReference>
<dbReference type="RefSeq" id="WP_012044452.1">
    <property type="nucleotide sequence ID" value="NC_009485.1"/>
</dbReference>
<dbReference type="SMR" id="A5EJW1"/>
<dbReference type="STRING" id="288000.BBta_4416"/>
<dbReference type="KEGG" id="bbt:BBta_4416"/>
<dbReference type="eggNOG" id="COG1826">
    <property type="taxonomic scope" value="Bacteria"/>
</dbReference>
<dbReference type="HOGENOM" id="CLU_086034_1_3_5"/>
<dbReference type="OrthoDB" id="7206969at2"/>
<dbReference type="Proteomes" id="UP000000246">
    <property type="component" value="Chromosome"/>
</dbReference>
<dbReference type="GO" id="GO:0033281">
    <property type="term" value="C:TAT protein transport complex"/>
    <property type="evidence" value="ECO:0007669"/>
    <property type="project" value="UniProtKB-UniRule"/>
</dbReference>
<dbReference type="GO" id="GO:0008320">
    <property type="term" value="F:protein transmembrane transporter activity"/>
    <property type="evidence" value="ECO:0007669"/>
    <property type="project" value="UniProtKB-UniRule"/>
</dbReference>
<dbReference type="GO" id="GO:0043953">
    <property type="term" value="P:protein transport by the Tat complex"/>
    <property type="evidence" value="ECO:0007669"/>
    <property type="project" value="UniProtKB-UniRule"/>
</dbReference>
<dbReference type="Gene3D" id="1.20.5.3310">
    <property type="match status" value="1"/>
</dbReference>
<dbReference type="HAMAP" id="MF_00237">
    <property type="entry name" value="TatB"/>
    <property type="match status" value="1"/>
</dbReference>
<dbReference type="InterPro" id="IPR003369">
    <property type="entry name" value="TatA/B/E"/>
</dbReference>
<dbReference type="InterPro" id="IPR018448">
    <property type="entry name" value="TatB"/>
</dbReference>
<dbReference type="NCBIfam" id="TIGR01410">
    <property type="entry name" value="tatB"/>
    <property type="match status" value="1"/>
</dbReference>
<dbReference type="PANTHER" id="PTHR33162">
    <property type="entry name" value="SEC-INDEPENDENT PROTEIN TRANSLOCASE PROTEIN TATA, CHLOROPLASTIC"/>
    <property type="match status" value="1"/>
</dbReference>
<dbReference type="PANTHER" id="PTHR33162:SF1">
    <property type="entry name" value="SEC-INDEPENDENT PROTEIN TRANSLOCASE PROTEIN TATA, CHLOROPLASTIC"/>
    <property type="match status" value="1"/>
</dbReference>
<dbReference type="Pfam" id="PF02416">
    <property type="entry name" value="TatA_B_E"/>
    <property type="match status" value="1"/>
</dbReference>
<dbReference type="PRINTS" id="PR01506">
    <property type="entry name" value="TATBPROTEIN"/>
</dbReference>
<proteinExistence type="inferred from homology"/>
<comment type="function">
    <text evidence="1">Part of the twin-arginine translocation (Tat) system that transports large folded proteins containing a characteristic twin-arginine motif in their signal peptide across membranes. Together with TatC, TatB is part of a receptor directly interacting with Tat signal peptides. TatB may form an oligomeric binding site that transiently accommodates folded Tat precursor proteins before their translocation.</text>
</comment>
<comment type="subunit">
    <text evidence="1">The Tat system comprises two distinct complexes: a TatABC complex, containing multiple copies of TatA, TatB and TatC subunits, and a separate TatA complex, containing only TatA subunits. Substrates initially bind to the TatABC complex, which probably triggers association of the separate TatA complex to form the active translocon.</text>
</comment>
<comment type="subcellular location">
    <subcellularLocation>
        <location evidence="1">Cell inner membrane</location>
        <topology evidence="1">Single-pass membrane protein</topology>
    </subcellularLocation>
</comment>
<comment type="similarity">
    <text evidence="1">Belongs to the TatB family.</text>
</comment>
<protein>
    <recommendedName>
        <fullName evidence="1">Sec-independent protein translocase protein TatB</fullName>
    </recommendedName>
</protein>
<organism>
    <name type="scientific">Bradyrhizobium sp. (strain BTAi1 / ATCC BAA-1182)</name>
    <dbReference type="NCBI Taxonomy" id="288000"/>
    <lineage>
        <taxon>Bacteria</taxon>
        <taxon>Pseudomonadati</taxon>
        <taxon>Pseudomonadota</taxon>
        <taxon>Alphaproteobacteria</taxon>
        <taxon>Hyphomicrobiales</taxon>
        <taxon>Nitrobacteraceae</taxon>
        <taxon>Bradyrhizobium</taxon>
    </lineage>
</organism>
<evidence type="ECO:0000255" key="1">
    <source>
        <dbReference type="HAMAP-Rule" id="MF_00237"/>
    </source>
</evidence>
<evidence type="ECO:0000256" key="2">
    <source>
        <dbReference type="SAM" id="MobiDB-lite"/>
    </source>
</evidence>
<feature type="chain" id="PRO_0000301147" description="Sec-independent protein translocase protein TatB">
    <location>
        <begin position="1"/>
        <end position="180"/>
    </location>
</feature>
<feature type="transmembrane region" description="Helical" evidence="1">
    <location>
        <begin position="1"/>
        <end position="21"/>
    </location>
</feature>
<feature type="region of interest" description="Disordered" evidence="2">
    <location>
        <begin position="95"/>
        <end position="180"/>
    </location>
</feature>
<feature type="compositionally biased region" description="Low complexity" evidence="2">
    <location>
        <begin position="103"/>
        <end position="123"/>
    </location>
</feature>
<feature type="compositionally biased region" description="Basic and acidic residues" evidence="2">
    <location>
        <begin position="170"/>
        <end position="180"/>
    </location>
</feature>
<accession>A5EJW1</accession>
<keyword id="KW-0997">Cell inner membrane</keyword>
<keyword id="KW-1003">Cell membrane</keyword>
<keyword id="KW-0472">Membrane</keyword>
<keyword id="KW-0653">Protein transport</keyword>
<keyword id="KW-1185">Reference proteome</keyword>
<keyword id="KW-0811">Translocation</keyword>
<keyword id="KW-0812">Transmembrane</keyword>
<keyword id="KW-1133">Transmembrane helix</keyword>
<keyword id="KW-0813">Transport</keyword>
<name>TATB_BRASB</name>